<proteinExistence type="evidence at transcript level"/>
<keyword id="KW-1015">Disulfide bond</keyword>
<keyword id="KW-0528">Neurotoxin</keyword>
<keyword id="KW-0629">Postsynaptic neurotoxin</keyword>
<keyword id="KW-0964">Secreted</keyword>
<keyword id="KW-0732">Signal</keyword>
<keyword id="KW-0800">Toxin</keyword>
<feature type="signal peptide" evidence="2">
    <location>
        <begin position="1"/>
        <end position="20"/>
    </location>
</feature>
<feature type="propeptide" id="PRO_0000400771" evidence="1">
    <location>
        <begin position="21"/>
        <end position="46"/>
    </location>
</feature>
<feature type="peptide" id="PRO_0000400772" description="U4-theraphotoxin-Hhn1x">
    <location>
        <begin position="47"/>
        <end position="83"/>
    </location>
</feature>
<feature type="disulfide bond" evidence="1">
    <location>
        <begin position="50"/>
        <end position="64"/>
    </location>
</feature>
<feature type="disulfide bond" evidence="1">
    <location>
        <begin position="54"/>
        <end position="75"/>
    </location>
</feature>
<feature type="disulfide bond" evidence="1">
    <location>
        <begin position="69"/>
        <end position="80"/>
    </location>
</feature>
<accession>D2Y215</accession>
<reference key="1">
    <citation type="journal article" date="2010" name="J. Proteome Res.">
        <title>Molecular diversification of peptide toxins from the tarantula Haplopelma hainanum (Ornithoctonus hainana) venom based on transcriptomic, peptidomic, and genomic analyses.</title>
        <authorList>
            <person name="Tang X."/>
            <person name="Zhang Y."/>
            <person name="Hu W."/>
            <person name="Xu D."/>
            <person name="Tao H."/>
            <person name="Yang X."/>
            <person name="Li Y."/>
            <person name="Jiang L."/>
            <person name="Liang S."/>
        </authorList>
    </citation>
    <scope>NUCLEOTIDE SEQUENCE [LARGE SCALE MRNA]</scope>
    <source>
        <tissue>Venom gland</tissue>
    </source>
</reference>
<evidence type="ECO:0000250" key="1"/>
<evidence type="ECO:0000255" key="2"/>
<evidence type="ECO:0000305" key="3"/>
<comment type="function">
    <text evidence="1">Postsynaptic neurotoxin.</text>
</comment>
<comment type="subcellular location">
    <subcellularLocation>
        <location evidence="1">Secreted</location>
    </subcellularLocation>
</comment>
<comment type="tissue specificity">
    <text>Expressed by the venom gland.</text>
</comment>
<comment type="similarity">
    <text evidence="3">Belongs to the neurotoxin 12 (Hwtx-2) family. 02 (Hwtx-2) subfamily.</text>
</comment>
<dbReference type="EMBL" id="GU292892">
    <property type="protein sequence ID" value="ADB56708.1"/>
    <property type="molecule type" value="mRNA"/>
</dbReference>
<dbReference type="SMR" id="D2Y215"/>
<dbReference type="ArachnoServer" id="AS001825">
    <property type="toxin name" value="U4-theraphotoxin-Hhn1x"/>
</dbReference>
<dbReference type="GO" id="GO:0005576">
    <property type="term" value="C:extracellular region"/>
    <property type="evidence" value="ECO:0007669"/>
    <property type="project" value="UniProtKB-SubCell"/>
</dbReference>
<dbReference type="GO" id="GO:0035792">
    <property type="term" value="C:host cell postsynaptic membrane"/>
    <property type="evidence" value="ECO:0007669"/>
    <property type="project" value="UniProtKB-KW"/>
</dbReference>
<dbReference type="GO" id="GO:0090729">
    <property type="term" value="F:toxin activity"/>
    <property type="evidence" value="ECO:0007669"/>
    <property type="project" value="UniProtKB-KW"/>
</dbReference>
<dbReference type="InterPro" id="IPR012625">
    <property type="entry name" value="Hwtx-2-like"/>
</dbReference>
<dbReference type="Pfam" id="PF08089">
    <property type="entry name" value="Toxin_20"/>
    <property type="match status" value="1"/>
</dbReference>
<dbReference type="SUPFAM" id="SSF57059">
    <property type="entry name" value="omega toxin-like"/>
    <property type="match status" value="1"/>
</dbReference>
<dbReference type="PROSITE" id="PS60022">
    <property type="entry name" value="HWTX_2"/>
    <property type="match status" value="1"/>
</dbReference>
<sequence length="83" mass="9215">MTLIAILTCAAALVLHTTAAEELEAESQLMEVGMPDTELEAVDEERLFECSVSCEIEKEGNKDCKKKKCKGGWKCKFNMCVKI</sequence>
<organism>
    <name type="scientific">Cyriopagopus hainanus</name>
    <name type="common">Chinese bird spider</name>
    <name type="synonym">Haplopelma hainanum</name>
    <dbReference type="NCBI Taxonomy" id="209901"/>
    <lineage>
        <taxon>Eukaryota</taxon>
        <taxon>Metazoa</taxon>
        <taxon>Ecdysozoa</taxon>
        <taxon>Arthropoda</taxon>
        <taxon>Chelicerata</taxon>
        <taxon>Arachnida</taxon>
        <taxon>Araneae</taxon>
        <taxon>Mygalomorphae</taxon>
        <taxon>Theraphosidae</taxon>
        <taxon>Haplopelma</taxon>
    </lineage>
</organism>
<name>H2D01_CYRHA</name>
<protein>
    <recommendedName>
        <fullName>U4-theraphotoxin-Hhn1x</fullName>
        <shortName>U4-TRTX-Hhn1x</shortName>
    </recommendedName>
    <alternativeName>
        <fullName>Hainantoxin-II-4</fullName>
        <shortName>HNTX-II-4</shortName>
    </alternativeName>
</protein>